<reference key="1">
    <citation type="journal article" date="2002" name="Proc. Natl. Acad. Sci. U.S.A.">
        <title>Genome sequence and comparative microarray analysis of serotype M18 group A Streptococcus strains associated with acute rheumatic fever outbreaks.</title>
        <authorList>
            <person name="Smoot J.C."/>
            <person name="Barbian K.D."/>
            <person name="Van Gompel J.J."/>
            <person name="Smoot L.M."/>
            <person name="Chaussee M.S."/>
            <person name="Sylva G.L."/>
            <person name="Sturdevant D.E."/>
            <person name="Ricklefs S.M."/>
            <person name="Porcella S.F."/>
            <person name="Parkins L.D."/>
            <person name="Beres S.B."/>
            <person name="Campbell D.S."/>
            <person name="Smith T.M."/>
            <person name="Zhang Q."/>
            <person name="Kapur V."/>
            <person name="Daly J.A."/>
            <person name="Veasy L.G."/>
            <person name="Musser J.M."/>
        </authorList>
    </citation>
    <scope>NUCLEOTIDE SEQUENCE [LARGE SCALE GENOMIC DNA]</scope>
    <source>
        <strain>MGAS8232</strain>
    </source>
</reference>
<dbReference type="EC" id="4.3.1.3" evidence="1"/>
<dbReference type="EMBL" id="AE009949">
    <property type="protein sequence ID" value="AAL98596.1"/>
    <property type="molecule type" value="Genomic_DNA"/>
</dbReference>
<dbReference type="RefSeq" id="WP_011018302.1">
    <property type="nucleotide sequence ID" value="NC_003485.1"/>
</dbReference>
<dbReference type="SMR" id="Q8NZ46"/>
<dbReference type="KEGG" id="spm:spyM18_2147"/>
<dbReference type="HOGENOM" id="CLU_014801_4_0_9"/>
<dbReference type="UniPathway" id="UPA00379">
    <property type="reaction ID" value="UER00549"/>
</dbReference>
<dbReference type="GO" id="GO:0005737">
    <property type="term" value="C:cytoplasm"/>
    <property type="evidence" value="ECO:0007669"/>
    <property type="project" value="UniProtKB-SubCell"/>
</dbReference>
<dbReference type="GO" id="GO:0004397">
    <property type="term" value="F:histidine ammonia-lyase activity"/>
    <property type="evidence" value="ECO:0007669"/>
    <property type="project" value="UniProtKB-UniRule"/>
</dbReference>
<dbReference type="GO" id="GO:0019556">
    <property type="term" value="P:L-histidine catabolic process to glutamate and formamide"/>
    <property type="evidence" value="ECO:0007669"/>
    <property type="project" value="UniProtKB-UniPathway"/>
</dbReference>
<dbReference type="GO" id="GO:0019557">
    <property type="term" value="P:L-histidine catabolic process to glutamate and formate"/>
    <property type="evidence" value="ECO:0007669"/>
    <property type="project" value="UniProtKB-UniPathway"/>
</dbReference>
<dbReference type="CDD" id="cd00332">
    <property type="entry name" value="PAL-HAL"/>
    <property type="match status" value="1"/>
</dbReference>
<dbReference type="FunFam" id="1.10.275.10:FF:000005">
    <property type="entry name" value="Histidine ammonia-lyase"/>
    <property type="match status" value="1"/>
</dbReference>
<dbReference type="FunFam" id="1.20.200.10:FF:000003">
    <property type="entry name" value="Histidine ammonia-lyase"/>
    <property type="match status" value="1"/>
</dbReference>
<dbReference type="Gene3D" id="1.20.200.10">
    <property type="entry name" value="Fumarase/aspartase (Central domain)"/>
    <property type="match status" value="1"/>
</dbReference>
<dbReference type="Gene3D" id="1.10.275.10">
    <property type="entry name" value="Fumarase/aspartase (N-terminal domain)"/>
    <property type="match status" value="1"/>
</dbReference>
<dbReference type="HAMAP" id="MF_00229">
    <property type="entry name" value="His_ammonia_lyase"/>
    <property type="match status" value="1"/>
</dbReference>
<dbReference type="InterPro" id="IPR001106">
    <property type="entry name" value="Aromatic_Lyase"/>
</dbReference>
<dbReference type="InterPro" id="IPR024083">
    <property type="entry name" value="Fumarase/histidase_N"/>
</dbReference>
<dbReference type="InterPro" id="IPR005921">
    <property type="entry name" value="HutH"/>
</dbReference>
<dbReference type="InterPro" id="IPR008948">
    <property type="entry name" value="L-Aspartase-like"/>
</dbReference>
<dbReference type="InterPro" id="IPR022313">
    <property type="entry name" value="Phe/His_NH3-lyase_AS"/>
</dbReference>
<dbReference type="NCBIfam" id="TIGR01225">
    <property type="entry name" value="hutH"/>
    <property type="match status" value="1"/>
</dbReference>
<dbReference type="NCBIfam" id="NF006871">
    <property type="entry name" value="PRK09367.1"/>
    <property type="match status" value="1"/>
</dbReference>
<dbReference type="PANTHER" id="PTHR10362">
    <property type="entry name" value="HISTIDINE AMMONIA-LYASE"/>
    <property type="match status" value="1"/>
</dbReference>
<dbReference type="Pfam" id="PF00221">
    <property type="entry name" value="Lyase_aromatic"/>
    <property type="match status" value="1"/>
</dbReference>
<dbReference type="SUPFAM" id="SSF48557">
    <property type="entry name" value="L-aspartase-like"/>
    <property type="match status" value="1"/>
</dbReference>
<dbReference type="PROSITE" id="PS00488">
    <property type="entry name" value="PAL_HISTIDASE"/>
    <property type="match status" value="1"/>
</dbReference>
<organism>
    <name type="scientific">Streptococcus pyogenes serotype M18 (strain MGAS8232)</name>
    <dbReference type="NCBI Taxonomy" id="186103"/>
    <lineage>
        <taxon>Bacteria</taxon>
        <taxon>Bacillati</taxon>
        <taxon>Bacillota</taxon>
        <taxon>Bacilli</taxon>
        <taxon>Lactobacillales</taxon>
        <taxon>Streptococcaceae</taxon>
        <taxon>Streptococcus</taxon>
    </lineage>
</organism>
<comment type="catalytic activity">
    <reaction evidence="1">
        <text>L-histidine = trans-urocanate + NH4(+)</text>
        <dbReference type="Rhea" id="RHEA:21232"/>
        <dbReference type="ChEBI" id="CHEBI:17771"/>
        <dbReference type="ChEBI" id="CHEBI:28938"/>
        <dbReference type="ChEBI" id="CHEBI:57595"/>
        <dbReference type="EC" id="4.3.1.3"/>
    </reaction>
</comment>
<comment type="pathway">
    <text evidence="1">Amino-acid degradation; L-histidine degradation into L-glutamate; N-formimidoyl-L-glutamate from L-histidine: step 1/3.</text>
</comment>
<comment type="subcellular location">
    <subcellularLocation>
        <location evidence="1">Cytoplasm</location>
    </subcellularLocation>
</comment>
<comment type="PTM">
    <text evidence="1">Contains an active site 4-methylidene-imidazol-5-one (MIO), which is formed autocatalytically by cyclization and dehydration of residues Ala-Ser-Gly.</text>
</comment>
<comment type="similarity">
    <text evidence="1">Belongs to the PAL/histidase family.</text>
</comment>
<evidence type="ECO:0000255" key="1">
    <source>
        <dbReference type="HAMAP-Rule" id="MF_00229"/>
    </source>
</evidence>
<keyword id="KW-0963">Cytoplasm</keyword>
<keyword id="KW-0369">Histidine metabolism</keyword>
<keyword id="KW-0456">Lyase</keyword>
<accession>Q8NZ46</accession>
<protein>
    <recommendedName>
        <fullName evidence="1">Histidine ammonia-lyase</fullName>
        <shortName evidence="1">Histidase</shortName>
        <ecNumber evidence="1">4.3.1.3</ecNumber>
    </recommendedName>
</protein>
<gene>
    <name evidence="1" type="primary">hutH</name>
    <name type="ordered locus">spyM18_2147</name>
</gene>
<sequence>MTRVINLDGESLTLEDVIAIARQGVACRIDDSAIEAVNASRKIVDDIVSEKRVVYGVTTGFGSLCNVSISPEDTVQLQENLIRTHASGFGDPLPEDAVRAIMLIRINSLVKGYSGIRLSTIEKLLELLNKGVHPYIPEKGSLGASGDLAPLAHMVLPMLGLGKAYYKGELLSGQEALDKAGIDKISLAAKEGLALINGTTVLTAIGALATYDAIQLLKLSDLAGALSLEVHNGITSPFEENLHTIRPQSGQLATARNIRNLLEGSQNTTVATQSRVQDPYTLRCMPQIHGASKDSIAYVKSKVDIEINSVTDNPIICKDGHVISGGNFHGEPMAQSFDFLGIAISEIGNVSERRVERLVNSQLSKLPSFLVKYPGLNSGFMITQYACASLASENKVLAHPASVDSIPSCENQEDFVSMGTTAARKAFEILKNSRRIVATEIMAACQALDLKPENHELGKGTKVAYDLFRKEVNFIEHDKHIEIYDELNKASAVIEDPSFLEAVEQAVELSIQF</sequence>
<feature type="chain" id="PRO_0000161042" description="Histidine ammonia-lyase">
    <location>
        <begin position="1"/>
        <end position="513"/>
    </location>
</feature>
<feature type="modified residue" description="2,3-didehydroalanine (Ser)" evidence="1">
    <location>
        <position position="145"/>
    </location>
</feature>
<feature type="cross-link" description="5-imidazolinone (Ala-Gly)" evidence="1">
    <location>
        <begin position="144"/>
        <end position="146"/>
    </location>
</feature>
<name>HUTH_STRP8</name>
<proteinExistence type="inferred from homology"/>